<organism>
    <name type="scientific">Paraburkholderia xenovorans (strain LB400)</name>
    <dbReference type="NCBI Taxonomy" id="266265"/>
    <lineage>
        <taxon>Bacteria</taxon>
        <taxon>Pseudomonadati</taxon>
        <taxon>Pseudomonadota</taxon>
        <taxon>Betaproteobacteria</taxon>
        <taxon>Burkholderiales</taxon>
        <taxon>Burkholderiaceae</taxon>
        <taxon>Paraburkholderia</taxon>
    </lineage>
</organism>
<sequence length="354" mass="36307">MTDTSVPTSTSPRLTSLSHGGGCGCKIAPGLLADLLKRSAPLPFFPDLLVGNDTADDAAVYKLNDEQAIVATTDFFMPIVDDPFDFGRIAATNALSDVYAMGGKPLMALAIVGMPINVLPHDVIAAVLKGGESVCAEAGIPLAGGHSIDSVEPIYGLVAIGVVDPKRVKRNAGAQAGDVLILGKPLGVGILSAALKKDRLDAAGYAAMIAATTKLNRPGAELSRLDGVHALTDITGFGLLGHTLELARGSNLTARVRYADLPWLPDVVGLAEAGIFTGASGRNWDAYGKSIGLPASLPATARTLLTDPQTSGGLLVSCAPQAVDEVLALFRADGFGEACVIGEMVSGEGRVEVV</sequence>
<comment type="function">
    <text evidence="1">Synthesizes selenophosphate from selenide and ATP.</text>
</comment>
<comment type="catalytic activity">
    <reaction evidence="1">
        <text>hydrogenselenide + ATP + H2O = selenophosphate + AMP + phosphate + 2 H(+)</text>
        <dbReference type="Rhea" id="RHEA:18737"/>
        <dbReference type="ChEBI" id="CHEBI:15377"/>
        <dbReference type="ChEBI" id="CHEBI:15378"/>
        <dbReference type="ChEBI" id="CHEBI:16144"/>
        <dbReference type="ChEBI" id="CHEBI:29317"/>
        <dbReference type="ChEBI" id="CHEBI:30616"/>
        <dbReference type="ChEBI" id="CHEBI:43474"/>
        <dbReference type="ChEBI" id="CHEBI:456215"/>
        <dbReference type="EC" id="2.7.9.3"/>
    </reaction>
</comment>
<comment type="cofactor">
    <cofactor evidence="1">
        <name>Mg(2+)</name>
        <dbReference type="ChEBI" id="CHEBI:18420"/>
    </cofactor>
    <text evidence="1">Binds 1 Mg(2+) ion per monomer.</text>
</comment>
<comment type="subunit">
    <text evidence="1">Homodimer.</text>
</comment>
<comment type="similarity">
    <text evidence="1">Belongs to the selenophosphate synthase 1 family. Class I subfamily.</text>
</comment>
<keyword id="KW-0067">ATP-binding</keyword>
<keyword id="KW-0418">Kinase</keyword>
<keyword id="KW-0460">Magnesium</keyword>
<keyword id="KW-0479">Metal-binding</keyword>
<keyword id="KW-0547">Nucleotide-binding</keyword>
<keyword id="KW-1185">Reference proteome</keyword>
<keyword id="KW-0711">Selenium</keyword>
<keyword id="KW-0808">Transferase</keyword>
<proteinExistence type="inferred from homology"/>
<feature type="chain" id="PRO_1000051594" description="Selenide, water dikinase">
    <location>
        <begin position="1"/>
        <end position="354"/>
    </location>
</feature>
<feature type="active site" evidence="1">
    <location>
        <position position="23"/>
    </location>
</feature>
<feature type="binding site" description="in other chain" evidence="1">
    <location>
        <position position="26"/>
    </location>
    <ligand>
        <name>ATP</name>
        <dbReference type="ChEBI" id="CHEBI:30616"/>
        <note>ligand shared between dimeric partners</note>
    </ligand>
</feature>
<feature type="binding site" description="in other chain" evidence="1">
    <location>
        <begin position="54"/>
        <end position="56"/>
    </location>
    <ligand>
        <name>ATP</name>
        <dbReference type="ChEBI" id="CHEBI:30616"/>
        <note>ligand shared between dimeric partners</note>
    </ligand>
</feature>
<feature type="binding site" evidence="1">
    <location>
        <position position="57"/>
    </location>
    <ligand>
        <name>Mg(2+)</name>
        <dbReference type="ChEBI" id="CHEBI:18420"/>
    </ligand>
</feature>
<feature type="binding site" description="in other chain" evidence="1">
    <location>
        <position position="74"/>
    </location>
    <ligand>
        <name>ATP</name>
        <dbReference type="ChEBI" id="CHEBI:30616"/>
        <note>ligand shared between dimeric partners</note>
    </ligand>
</feature>
<feature type="binding site" description="in other chain" evidence="1">
    <location>
        <position position="97"/>
    </location>
    <ligand>
        <name>ATP</name>
        <dbReference type="ChEBI" id="CHEBI:30616"/>
        <note>ligand shared between dimeric partners</note>
    </ligand>
</feature>
<feature type="binding site" evidence="1">
    <location>
        <position position="97"/>
    </location>
    <ligand>
        <name>Mg(2+)</name>
        <dbReference type="ChEBI" id="CHEBI:18420"/>
    </ligand>
</feature>
<feature type="binding site" evidence="1">
    <location>
        <begin position="145"/>
        <end position="147"/>
    </location>
    <ligand>
        <name>ATP</name>
        <dbReference type="ChEBI" id="CHEBI:30616"/>
        <note>ligand shared between dimeric partners</note>
    </ligand>
</feature>
<feature type="binding site" evidence="1">
    <location>
        <position position="233"/>
    </location>
    <ligand>
        <name>Mg(2+)</name>
        <dbReference type="ChEBI" id="CHEBI:18420"/>
    </ligand>
</feature>
<feature type="site" description="Important for catalytic activity" evidence="1">
    <location>
        <position position="26"/>
    </location>
</feature>
<gene>
    <name evidence="1" type="primary">selD</name>
    <name type="ordered locus">Bxeno_B0470</name>
    <name type="ORF">Bxe_B2555</name>
</gene>
<name>SELD_PARXL</name>
<protein>
    <recommendedName>
        <fullName evidence="1">Selenide, water dikinase</fullName>
        <ecNumber evidence="1">2.7.9.3</ecNumber>
    </recommendedName>
    <alternativeName>
        <fullName evidence="1">Selenium donor protein</fullName>
    </alternativeName>
    <alternativeName>
        <fullName evidence="1">Selenophosphate synthase</fullName>
    </alternativeName>
</protein>
<reference key="1">
    <citation type="journal article" date="2006" name="Proc. Natl. Acad. Sci. U.S.A.">
        <title>Burkholderia xenovorans LB400 harbors a multi-replicon, 9.73-Mbp genome shaped for versatility.</title>
        <authorList>
            <person name="Chain P.S.G."/>
            <person name="Denef V.J."/>
            <person name="Konstantinidis K.T."/>
            <person name="Vergez L.M."/>
            <person name="Agullo L."/>
            <person name="Reyes V.L."/>
            <person name="Hauser L."/>
            <person name="Cordova M."/>
            <person name="Gomez L."/>
            <person name="Gonzalez M."/>
            <person name="Land M."/>
            <person name="Lao V."/>
            <person name="Larimer F."/>
            <person name="LiPuma J.J."/>
            <person name="Mahenthiralingam E."/>
            <person name="Malfatti S.A."/>
            <person name="Marx C.J."/>
            <person name="Parnell J.J."/>
            <person name="Ramette A."/>
            <person name="Richardson P."/>
            <person name="Seeger M."/>
            <person name="Smith D."/>
            <person name="Spilker T."/>
            <person name="Sul W.J."/>
            <person name="Tsoi T.V."/>
            <person name="Ulrich L.E."/>
            <person name="Zhulin I.B."/>
            <person name="Tiedje J.M."/>
        </authorList>
    </citation>
    <scope>NUCLEOTIDE SEQUENCE [LARGE SCALE GENOMIC DNA]</scope>
    <source>
        <strain>LB400</strain>
    </source>
</reference>
<accession>Q13R51</accession>
<evidence type="ECO:0000255" key="1">
    <source>
        <dbReference type="HAMAP-Rule" id="MF_00625"/>
    </source>
</evidence>
<dbReference type="EC" id="2.7.9.3" evidence="1"/>
<dbReference type="EMBL" id="CP000271">
    <property type="protein sequence ID" value="ABE33438.1"/>
    <property type="molecule type" value="Genomic_DNA"/>
</dbReference>
<dbReference type="RefSeq" id="WP_011490806.1">
    <property type="nucleotide sequence ID" value="NC_007952.1"/>
</dbReference>
<dbReference type="SMR" id="Q13R51"/>
<dbReference type="STRING" id="266265.Bxe_B2555"/>
<dbReference type="KEGG" id="bxb:DR64_4882"/>
<dbReference type="KEGG" id="bxe:Bxe_B2555"/>
<dbReference type="PATRIC" id="fig|266265.5.peg.5148"/>
<dbReference type="eggNOG" id="COG0709">
    <property type="taxonomic scope" value="Bacteria"/>
</dbReference>
<dbReference type="OrthoDB" id="9767928at2"/>
<dbReference type="Proteomes" id="UP000001817">
    <property type="component" value="Chromosome 2"/>
</dbReference>
<dbReference type="GO" id="GO:0005737">
    <property type="term" value="C:cytoplasm"/>
    <property type="evidence" value="ECO:0007669"/>
    <property type="project" value="TreeGrafter"/>
</dbReference>
<dbReference type="GO" id="GO:0005524">
    <property type="term" value="F:ATP binding"/>
    <property type="evidence" value="ECO:0007669"/>
    <property type="project" value="UniProtKB-UniRule"/>
</dbReference>
<dbReference type="GO" id="GO:0000287">
    <property type="term" value="F:magnesium ion binding"/>
    <property type="evidence" value="ECO:0007669"/>
    <property type="project" value="UniProtKB-UniRule"/>
</dbReference>
<dbReference type="GO" id="GO:0004756">
    <property type="term" value="F:selenide, water dikinase activity"/>
    <property type="evidence" value="ECO:0007669"/>
    <property type="project" value="UniProtKB-UniRule"/>
</dbReference>
<dbReference type="GO" id="GO:0016260">
    <property type="term" value="P:selenocysteine biosynthetic process"/>
    <property type="evidence" value="ECO:0007669"/>
    <property type="project" value="InterPro"/>
</dbReference>
<dbReference type="CDD" id="cd02195">
    <property type="entry name" value="SelD"/>
    <property type="match status" value="1"/>
</dbReference>
<dbReference type="FunFam" id="3.30.1330.10:FF:000003">
    <property type="entry name" value="Selenide, water dikinase"/>
    <property type="match status" value="1"/>
</dbReference>
<dbReference type="FunFam" id="3.90.650.10:FF:000004">
    <property type="entry name" value="Selenide, water dikinase"/>
    <property type="match status" value="1"/>
</dbReference>
<dbReference type="Gene3D" id="3.90.650.10">
    <property type="entry name" value="PurM-like C-terminal domain"/>
    <property type="match status" value="1"/>
</dbReference>
<dbReference type="Gene3D" id="3.30.1330.10">
    <property type="entry name" value="PurM-like, N-terminal domain"/>
    <property type="match status" value="1"/>
</dbReference>
<dbReference type="HAMAP" id="MF_00625">
    <property type="entry name" value="SelD"/>
    <property type="match status" value="1"/>
</dbReference>
<dbReference type="InterPro" id="IPR010918">
    <property type="entry name" value="PurM-like_C_dom"/>
</dbReference>
<dbReference type="InterPro" id="IPR036676">
    <property type="entry name" value="PurM-like_C_sf"/>
</dbReference>
<dbReference type="InterPro" id="IPR016188">
    <property type="entry name" value="PurM-like_N"/>
</dbReference>
<dbReference type="InterPro" id="IPR036921">
    <property type="entry name" value="PurM-like_N_sf"/>
</dbReference>
<dbReference type="InterPro" id="IPR023061">
    <property type="entry name" value="SelD_I"/>
</dbReference>
<dbReference type="InterPro" id="IPR004536">
    <property type="entry name" value="SPS/SelD"/>
</dbReference>
<dbReference type="NCBIfam" id="NF002098">
    <property type="entry name" value="PRK00943.1"/>
    <property type="match status" value="1"/>
</dbReference>
<dbReference type="NCBIfam" id="TIGR00476">
    <property type="entry name" value="selD"/>
    <property type="match status" value="1"/>
</dbReference>
<dbReference type="PANTHER" id="PTHR10256:SF0">
    <property type="entry name" value="INACTIVE SELENIDE, WATER DIKINASE-LIKE PROTEIN-RELATED"/>
    <property type="match status" value="1"/>
</dbReference>
<dbReference type="PANTHER" id="PTHR10256">
    <property type="entry name" value="SELENIDE, WATER DIKINASE"/>
    <property type="match status" value="1"/>
</dbReference>
<dbReference type="Pfam" id="PF00586">
    <property type="entry name" value="AIRS"/>
    <property type="match status" value="1"/>
</dbReference>
<dbReference type="Pfam" id="PF02769">
    <property type="entry name" value="AIRS_C"/>
    <property type="match status" value="1"/>
</dbReference>
<dbReference type="PIRSF" id="PIRSF036407">
    <property type="entry name" value="Selenphspht_syn"/>
    <property type="match status" value="1"/>
</dbReference>
<dbReference type="SUPFAM" id="SSF56042">
    <property type="entry name" value="PurM C-terminal domain-like"/>
    <property type="match status" value="1"/>
</dbReference>
<dbReference type="SUPFAM" id="SSF55326">
    <property type="entry name" value="PurM N-terminal domain-like"/>
    <property type="match status" value="1"/>
</dbReference>